<evidence type="ECO:0000250" key="1"/>
<evidence type="ECO:0000305" key="2"/>
<keyword id="KW-0072">Autophagy</keyword>
<keyword id="KW-0159">Chromosome partition</keyword>
<keyword id="KW-0963">Cytoplasm</keyword>
<keyword id="KW-0206">Cytoskeleton</keyword>
<keyword id="KW-0415">Karyogamy</keyword>
<keyword id="KW-0493">Microtubule</keyword>
<keyword id="KW-0653">Protein transport</keyword>
<keyword id="KW-1185">Reference proteome</keyword>
<keyword id="KW-0813">Transport</keyword>
<feature type="chain" id="PRO_0000076208" description="Autophagy-related protein 31">
    <location>
        <begin position="1"/>
        <end position="142"/>
    </location>
</feature>
<name>CIS1_EREGS</name>
<proteinExistence type="inferred from homology"/>
<accession>Q755V9</accession>
<protein>
    <recommendedName>
        <fullName>Autophagy-related protein 31</fullName>
    </recommendedName>
    <alternativeName>
        <fullName>Protein CIS1</fullName>
    </alternativeName>
</protein>
<sequence length="142" mass="16139">MEPFVITASECDCNSAHSSRVSKDGYALSDELSNETMFLTQVKYIFEGEEDHIDDNTMQEINTDIVNVVIVELDETLEIKNVELISDEYQLLGFSNDADNDLNLTILSEFPADVSPGTRDLGKLVTRYQHQNKHLKHMLQEL</sequence>
<reference key="1">
    <citation type="journal article" date="2004" name="Science">
        <title>The Ashbya gossypii genome as a tool for mapping the ancient Saccharomyces cerevisiae genome.</title>
        <authorList>
            <person name="Dietrich F.S."/>
            <person name="Voegeli S."/>
            <person name="Brachat S."/>
            <person name="Lerch A."/>
            <person name="Gates K."/>
            <person name="Steiner S."/>
            <person name="Mohr C."/>
            <person name="Poehlmann R."/>
            <person name="Luedi P."/>
            <person name="Choi S."/>
            <person name="Wing R.A."/>
            <person name="Flavier A."/>
            <person name="Gaffney T.D."/>
            <person name="Philippsen P."/>
        </authorList>
    </citation>
    <scope>NUCLEOTIDE SEQUENCE [LARGE SCALE GENOMIC DNA]</scope>
    <source>
        <strain>ATCC 10895 / CBS 109.51 / FGSC 9923 / NRRL Y-1056</strain>
    </source>
</reference>
<reference key="2">
    <citation type="journal article" date="2013" name="G3 (Bethesda)">
        <title>Genomes of Ashbya fungi isolated from insects reveal four mating-type loci, numerous translocations, lack of transposons, and distinct gene duplications.</title>
        <authorList>
            <person name="Dietrich F.S."/>
            <person name="Voegeli S."/>
            <person name="Kuo S."/>
            <person name="Philippsen P."/>
        </authorList>
    </citation>
    <scope>GENOME REANNOTATION</scope>
    <source>
        <strain>ATCC 10895 / CBS 109.51 / FGSC 9923 / NRRL Y-1056</strain>
    </source>
</reference>
<gene>
    <name type="primary">CIS1</name>
    <name type="synonym">ATG31</name>
    <name type="ordered locus">AER409C</name>
</gene>
<organism>
    <name type="scientific">Eremothecium gossypii (strain ATCC 10895 / CBS 109.51 / FGSC 9923 / NRRL Y-1056)</name>
    <name type="common">Yeast</name>
    <name type="synonym">Ashbya gossypii</name>
    <dbReference type="NCBI Taxonomy" id="284811"/>
    <lineage>
        <taxon>Eukaryota</taxon>
        <taxon>Fungi</taxon>
        <taxon>Dikarya</taxon>
        <taxon>Ascomycota</taxon>
        <taxon>Saccharomycotina</taxon>
        <taxon>Saccharomycetes</taxon>
        <taxon>Saccharomycetales</taxon>
        <taxon>Saccharomycetaceae</taxon>
        <taxon>Eremothecium</taxon>
    </lineage>
</organism>
<dbReference type="EMBL" id="AE016818">
    <property type="protein sequence ID" value="AAS53088.1"/>
    <property type="molecule type" value="Genomic_DNA"/>
</dbReference>
<dbReference type="RefSeq" id="NP_985264.1">
    <property type="nucleotide sequence ID" value="NM_210618.1"/>
</dbReference>
<dbReference type="SMR" id="Q755V9"/>
<dbReference type="STRING" id="284811.Q755V9"/>
<dbReference type="EnsemblFungi" id="AAS53088">
    <property type="protein sequence ID" value="AAS53088"/>
    <property type="gene ID" value="AGOS_AER409C"/>
</dbReference>
<dbReference type="GeneID" id="4621480"/>
<dbReference type="KEGG" id="ago:AGOS_AER409C"/>
<dbReference type="HOGENOM" id="CLU_138108_0_0_1"/>
<dbReference type="InParanoid" id="Q755V9"/>
<dbReference type="OMA" id="QIETICN"/>
<dbReference type="OrthoDB" id="4065598at2759"/>
<dbReference type="Proteomes" id="UP000000591">
    <property type="component" value="Chromosome V"/>
</dbReference>
<dbReference type="GO" id="GO:0005874">
    <property type="term" value="C:microtubule"/>
    <property type="evidence" value="ECO:0007669"/>
    <property type="project" value="UniProtKB-KW"/>
</dbReference>
<dbReference type="GO" id="GO:0000407">
    <property type="term" value="C:phagophore assembly site"/>
    <property type="evidence" value="ECO:0007669"/>
    <property type="project" value="UniProtKB-SubCell"/>
</dbReference>
<dbReference type="GO" id="GO:0006914">
    <property type="term" value="P:autophagy"/>
    <property type="evidence" value="ECO:0007669"/>
    <property type="project" value="UniProtKB-KW"/>
</dbReference>
<dbReference type="GO" id="GO:0007059">
    <property type="term" value="P:chromosome segregation"/>
    <property type="evidence" value="ECO:0007669"/>
    <property type="project" value="UniProtKB-KW"/>
</dbReference>
<dbReference type="GO" id="GO:0000741">
    <property type="term" value="P:karyogamy"/>
    <property type="evidence" value="ECO:0007669"/>
    <property type="project" value="UniProtKB-KW"/>
</dbReference>
<dbReference type="GO" id="GO:0015031">
    <property type="term" value="P:protein transport"/>
    <property type="evidence" value="ECO:0007669"/>
    <property type="project" value="UniProtKB-KW"/>
</dbReference>
<dbReference type="Gene3D" id="2.60.270.60">
    <property type="match status" value="1"/>
</dbReference>
<dbReference type="InterPro" id="IPR018621">
    <property type="entry name" value="Atg31"/>
</dbReference>
<dbReference type="Pfam" id="PF09795">
    <property type="entry name" value="ATG31"/>
    <property type="match status" value="1"/>
</dbReference>
<comment type="function">
    <text evidence="1">Plays a role in starvation-induced autophagy. Involved in mitophagy. Functions with ATG17 and ATG29 at the preautophagosomal structure (PAS) in order to form normal autophagosomes under starvation conditions. May be involved in microtubule function, such as chromosome segregation and karyogamy (By similarity).</text>
</comment>
<comment type="subcellular location">
    <subcellularLocation>
        <location evidence="2">Cytoplasm</location>
        <location evidence="2">Cytoskeleton</location>
    </subcellularLocation>
    <subcellularLocation>
        <location evidence="1">Preautophagosomal structure</location>
    </subcellularLocation>
</comment>